<feature type="signal peptide" evidence="4">
    <location>
        <begin position="1"/>
        <end position="32"/>
    </location>
</feature>
<feature type="chain" id="PRO_0000007936" description="Endoglucanase C">
    <location>
        <begin position="33"/>
        <end position="460"/>
    </location>
</feature>
<feature type="domain" description="Dockerin" evidence="2">
    <location>
        <begin position="400"/>
        <end position="460"/>
    </location>
</feature>
<feature type="active site" description="Proton donor" evidence="1">
    <location>
        <position position="99"/>
    </location>
</feature>
<feature type="active site" description="Nucleophile" evidence="3">
    <location>
        <position position="155"/>
    </location>
</feature>
<feature type="sequence conflict" description="In Ref. 1; AAA73867." evidence="5" ref="1">
    <original>S</original>
    <variation>T</variation>
    <location>
        <position position="91"/>
    </location>
</feature>
<proteinExistence type="evidence at protein level"/>
<accession>P37699</accession>
<accession>B8I7V2</accession>
<reference key="1">
    <citation type="journal article" date="1992" name="Gene">
        <title>Sequence analysis of a gene cluster encoding cellulases from Clostridium cellulolyticum.</title>
        <authorList>
            <person name="Bagnara-Tardif C."/>
            <person name="Gaudin C."/>
            <person name="Belaich A."/>
            <person name="Hoest P."/>
            <person name="Citard T."/>
            <person name="Belaich J.-P."/>
        </authorList>
    </citation>
    <scope>NUCLEOTIDE SEQUENCE [GENOMIC DNA]</scope>
    <source>
        <strain>ATCC 35319 / DSM 5812 / JCM 6584 / H10</strain>
    </source>
</reference>
<reference key="2">
    <citation type="submission" date="2009-01" db="EMBL/GenBank/DDBJ databases">
        <title>Complete sequence of Clostridium cellulolyticum H10.</title>
        <authorList>
            <consortium name="US DOE Joint Genome Institute"/>
            <person name="Lucas S."/>
            <person name="Copeland A."/>
            <person name="Lapidus A."/>
            <person name="Glavina del Rio T."/>
            <person name="Dalin E."/>
            <person name="Tice H."/>
            <person name="Bruce D."/>
            <person name="Goodwin L."/>
            <person name="Pitluck S."/>
            <person name="Chertkov O."/>
            <person name="Saunders E."/>
            <person name="Brettin T."/>
            <person name="Detter J.C."/>
            <person name="Han C."/>
            <person name="Larimer F."/>
            <person name="Land M."/>
            <person name="Hauser L."/>
            <person name="Kyrpides N."/>
            <person name="Ivanova N."/>
            <person name="Zhou J."/>
            <person name="Richardson P."/>
        </authorList>
    </citation>
    <scope>NUCLEOTIDE SEQUENCE [LARGE SCALE GENOMIC DNA]</scope>
    <source>
        <strain>ATCC 35319 / DSM 5812 / JCM 6584 / H10</strain>
    </source>
</reference>
<reference key="3">
    <citation type="journal article" date="1993" name="Eur. J. Biochem.">
        <title>Purification and characterization of endoglucanase C from Clostridium cellulolyticum. Catalytic comparison with endoglucanase A.</title>
        <authorList>
            <person name="Fierobe H.-P."/>
            <person name="Bagnara-Tardif C."/>
            <person name="Gaudin C."/>
            <person name="Guerlesquin F."/>
            <person name="Sauve P."/>
            <person name="Belaich A."/>
            <person name="Belaich J.-P."/>
        </authorList>
    </citation>
    <scope>PROTEIN SEQUENCE OF 33-37</scope>
    <scope>CHARACTERIZATION</scope>
    <source>
        <strain>ATCC 35319 / DSM 5812 / JCM 6584 / H10</strain>
    </source>
</reference>
<protein>
    <recommendedName>
        <fullName>Endoglucanase C</fullName>
        <ecNumber>3.2.1.4</ecNumber>
    </recommendedName>
    <alternativeName>
        <fullName>Cellulase C</fullName>
    </alternativeName>
    <alternativeName>
        <fullName>EGCCC</fullName>
    </alternativeName>
    <alternativeName>
        <fullName>Endo-1,4-beta-glucanase C</fullName>
    </alternativeName>
</protein>
<comment type="function">
    <text>The biological conversion of cellulose to glucose generally requires three types of hydrolytic enzymes: (1) Endoglucanases which cut internal beta-1,4-glucosidic bonds; (2) Exocellobiohydrolases that cut the disaccharide cellobiose from the non-reducing end of the cellulose polymer chain; (3) Beta-1,4-glucosidases which hydrolyze the cellobiose and other short cello-oligosaccharides to glucose.</text>
</comment>
<comment type="catalytic activity">
    <reaction>
        <text>Endohydrolysis of (1-&gt;4)-beta-D-glucosidic linkages in cellulose, lichenin and cereal beta-D-glucans.</text>
        <dbReference type="EC" id="3.2.1.4"/>
    </reaction>
</comment>
<comment type="pathway">
    <text>Glycan metabolism; cellulose degradation.</text>
</comment>
<comment type="subunit">
    <text>Monomer.</text>
</comment>
<comment type="PTM">
    <text>There are two forms of the cellulase. The shorter form lacks probably the C-terminal reiterated domains.</text>
</comment>
<comment type="similarity">
    <text evidence="5">Belongs to the glycosyl hydrolase 8 (cellulase D) family.</text>
</comment>
<organism>
    <name type="scientific">Ruminiclostridium cellulolyticum (strain ATCC 35319 / DSM 5812 / JCM 6584 / H10)</name>
    <name type="common">Clostridium cellulolyticum</name>
    <dbReference type="NCBI Taxonomy" id="394503"/>
    <lineage>
        <taxon>Bacteria</taxon>
        <taxon>Bacillati</taxon>
        <taxon>Bacillota</taxon>
        <taxon>Clostridia</taxon>
        <taxon>Eubacteriales</taxon>
        <taxon>Oscillospiraceae</taxon>
        <taxon>Ruminiclostridium</taxon>
    </lineage>
</organism>
<keyword id="KW-0119">Carbohydrate metabolism</keyword>
<keyword id="KW-0136">Cellulose degradation</keyword>
<keyword id="KW-0903">Direct protein sequencing</keyword>
<keyword id="KW-0326">Glycosidase</keyword>
<keyword id="KW-0378">Hydrolase</keyword>
<keyword id="KW-0624">Polysaccharide degradation</keyword>
<keyword id="KW-1185">Reference proteome</keyword>
<keyword id="KW-0732">Signal</keyword>
<name>GUNC_RUMCH</name>
<sequence length="460" mass="50483">MIKGSSLKRFKSLVMAAIFSVSIISTAIASSAADQIPFPYDAKYPNGAYSCLADSQSIGNNLVRSEWEQWKSAHITSNGARGYKRVQRDASTNYDTVSEGLGYGLLLSVYFGEQQLFDDLYRYVKVFLNSNGLMSWRIDSSGNIMGKDSIGAATDADEDIAVSLVFAHKKWGTSGGFNYQTEAKNYINNIYNKMVEPGTYVIKAGDTWGGSNVTNPSYFAPAWYRIFADFTGNSGWINVANKCYEIADKARNSNTGLVPDWCTANGTPASGQGFDFYYDAIRYQWRAAIDYSWYGTAKAKTHCDAISNFFKNIGYANIKDGYTISGSQISSNHTATFVSCAAAAAMTGTDTTYAKNIYNECVKVKDSGNYTYFGNTLRMMVLLYTTGNFPNLYTYNSQPKPDLKGDVNNDGAIDALDIAALKKAILTQTTSNISLTNADMNNDGNIDAIDFAQLKVKLLN</sequence>
<gene>
    <name type="primary">celCCC</name>
    <name type="ordered locus">Ccel_0730</name>
</gene>
<dbReference type="EC" id="3.2.1.4"/>
<dbReference type="EMBL" id="M87018">
    <property type="protein sequence ID" value="AAA73867.1"/>
    <property type="molecule type" value="Genomic_DNA"/>
</dbReference>
<dbReference type="EMBL" id="CP001348">
    <property type="protein sequence ID" value="ACL75109.1"/>
    <property type="molecule type" value="Genomic_DNA"/>
</dbReference>
<dbReference type="PIR" id="JC1299">
    <property type="entry name" value="JC1299"/>
</dbReference>
<dbReference type="RefSeq" id="WP_015924276.1">
    <property type="nucleotide sequence ID" value="NC_011898.1"/>
</dbReference>
<dbReference type="SMR" id="P37699"/>
<dbReference type="STRING" id="394503.Ccel_0730"/>
<dbReference type="CAZy" id="GH8">
    <property type="family name" value="Glycoside Hydrolase Family 8"/>
</dbReference>
<dbReference type="KEGG" id="cce:Ccel_0730"/>
<dbReference type="eggNOG" id="COG3405">
    <property type="taxonomic scope" value="Bacteria"/>
</dbReference>
<dbReference type="HOGENOM" id="CLU_036185_0_0_9"/>
<dbReference type="OrthoDB" id="9803461at2"/>
<dbReference type="UniPathway" id="UPA00696"/>
<dbReference type="Proteomes" id="UP000001349">
    <property type="component" value="Chromosome"/>
</dbReference>
<dbReference type="GO" id="GO:0008810">
    <property type="term" value="F:cellulase activity"/>
    <property type="evidence" value="ECO:0007669"/>
    <property type="project" value="UniProtKB-EC"/>
</dbReference>
<dbReference type="GO" id="GO:0030245">
    <property type="term" value="P:cellulose catabolic process"/>
    <property type="evidence" value="ECO:0007669"/>
    <property type="project" value="UniProtKB-UniPathway"/>
</dbReference>
<dbReference type="CDD" id="cd14256">
    <property type="entry name" value="Dockerin_I"/>
    <property type="match status" value="1"/>
</dbReference>
<dbReference type="Gene3D" id="1.50.10.10">
    <property type="match status" value="1"/>
</dbReference>
<dbReference type="Gene3D" id="1.10.1330.10">
    <property type="entry name" value="Dockerin domain"/>
    <property type="match status" value="1"/>
</dbReference>
<dbReference type="InterPro" id="IPR008928">
    <property type="entry name" value="6-hairpin_glycosidase_sf"/>
</dbReference>
<dbReference type="InterPro" id="IPR012341">
    <property type="entry name" value="6hp_glycosidase-like_sf"/>
</dbReference>
<dbReference type="InterPro" id="IPR002105">
    <property type="entry name" value="Dockerin_1_rpt"/>
</dbReference>
<dbReference type="InterPro" id="IPR016134">
    <property type="entry name" value="Dockerin_dom"/>
</dbReference>
<dbReference type="InterPro" id="IPR036439">
    <property type="entry name" value="Dockerin_dom_sf"/>
</dbReference>
<dbReference type="InterPro" id="IPR018247">
    <property type="entry name" value="EF_Hand_1_Ca_BS"/>
</dbReference>
<dbReference type="InterPro" id="IPR002037">
    <property type="entry name" value="Glyco_hydro_8"/>
</dbReference>
<dbReference type="InterPro" id="IPR019834">
    <property type="entry name" value="Glyco_hydro_8_CS"/>
</dbReference>
<dbReference type="Pfam" id="PF00404">
    <property type="entry name" value="Dockerin_1"/>
    <property type="match status" value="1"/>
</dbReference>
<dbReference type="Pfam" id="PF01270">
    <property type="entry name" value="Glyco_hydro_8"/>
    <property type="match status" value="1"/>
</dbReference>
<dbReference type="PRINTS" id="PR00735">
    <property type="entry name" value="GLHYDRLASE8"/>
</dbReference>
<dbReference type="SUPFAM" id="SSF48208">
    <property type="entry name" value="Six-hairpin glycosidases"/>
    <property type="match status" value="1"/>
</dbReference>
<dbReference type="SUPFAM" id="SSF63446">
    <property type="entry name" value="Type I dockerin domain"/>
    <property type="match status" value="1"/>
</dbReference>
<dbReference type="PROSITE" id="PS00448">
    <property type="entry name" value="CLOS_CELLULOSOME_RPT"/>
    <property type="match status" value="1"/>
</dbReference>
<dbReference type="PROSITE" id="PS51766">
    <property type="entry name" value="DOCKERIN"/>
    <property type="match status" value="1"/>
</dbReference>
<dbReference type="PROSITE" id="PS00018">
    <property type="entry name" value="EF_HAND_1"/>
    <property type="match status" value="2"/>
</dbReference>
<dbReference type="PROSITE" id="PS00812">
    <property type="entry name" value="GLYCOSYL_HYDROL_F8"/>
    <property type="match status" value="1"/>
</dbReference>
<evidence type="ECO:0000250" key="1"/>
<evidence type="ECO:0000255" key="2">
    <source>
        <dbReference type="PROSITE-ProRule" id="PRU01102"/>
    </source>
</evidence>
<evidence type="ECO:0000255" key="3">
    <source>
        <dbReference type="PROSITE-ProRule" id="PRU10058"/>
    </source>
</evidence>
<evidence type="ECO:0000269" key="4">
    <source>
    </source>
</evidence>
<evidence type="ECO:0000305" key="5"/>